<keyword id="KW-0274">FAD</keyword>
<keyword id="KW-0285">Flavoprotein</keyword>
<keyword id="KW-0521">NADP</keyword>
<keyword id="KW-0560">Oxidoreductase</keyword>
<keyword id="KW-1185">Reference proteome</keyword>
<comment type="catalytic activity">
    <reaction evidence="1">
        <text>2 reduced [2Fe-2S]-[ferredoxin] + NADP(+) + H(+) = 2 oxidized [2Fe-2S]-[ferredoxin] + NADPH</text>
        <dbReference type="Rhea" id="RHEA:20125"/>
        <dbReference type="Rhea" id="RHEA-COMP:10000"/>
        <dbReference type="Rhea" id="RHEA-COMP:10001"/>
        <dbReference type="ChEBI" id="CHEBI:15378"/>
        <dbReference type="ChEBI" id="CHEBI:33737"/>
        <dbReference type="ChEBI" id="CHEBI:33738"/>
        <dbReference type="ChEBI" id="CHEBI:57783"/>
        <dbReference type="ChEBI" id="CHEBI:58349"/>
        <dbReference type="EC" id="1.18.1.2"/>
    </reaction>
</comment>
<comment type="cofactor">
    <cofactor evidence="1">
        <name>FAD</name>
        <dbReference type="ChEBI" id="CHEBI:57692"/>
    </cofactor>
    <text evidence="1">Binds 1 FAD per subunit.</text>
</comment>
<comment type="subunit">
    <text evidence="1">Homodimer.</text>
</comment>
<comment type="similarity">
    <text evidence="1">Belongs to the ferredoxin--NADP reductase type 2 family.</text>
</comment>
<feature type="chain" id="PRO_0000364848" description="Ferredoxin--NADP reductase">
    <location>
        <begin position="1"/>
        <end position="331"/>
    </location>
</feature>
<feature type="binding site" evidence="1">
    <location>
        <position position="34"/>
    </location>
    <ligand>
        <name>FAD</name>
        <dbReference type="ChEBI" id="CHEBI:57692"/>
    </ligand>
</feature>
<feature type="binding site" evidence="1">
    <location>
        <position position="42"/>
    </location>
    <ligand>
        <name>FAD</name>
        <dbReference type="ChEBI" id="CHEBI:57692"/>
    </ligand>
</feature>
<feature type="binding site" evidence="1">
    <location>
        <position position="47"/>
    </location>
    <ligand>
        <name>FAD</name>
        <dbReference type="ChEBI" id="CHEBI:57692"/>
    </ligand>
</feature>
<feature type="binding site" evidence="1">
    <location>
        <position position="87"/>
    </location>
    <ligand>
        <name>FAD</name>
        <dbReference type="ChEBI" id="CHEBI:57692"/>
    </ligand>
</feature>
<feature type="binding site" evidence="1">
    <location>
        <position position="120"/>
    </location>
    <ligand>
        <name>FAD</name>
        <dbReference type="ChEBI" id="CHEBI:57692"/>
    </ligand>
</feature>
<feature type="binding site" evidence="1">
    <location>
        <position position="285"/>
    </location>
    <ligand>
        <name>FAD</name>
        <dbReference type="ChEBI" id="CHEBI:57692"/>
    </ligand>
</feature>
<feature type="binding site" evidence="1">
    <location>
        <position position="325"/>
    </location>
    <ligand>
        <name>FAD</name>
        <dbReference type="ChEBI" id="CHEBI:57692"/>
    </ligand>
</feature>
<sequence length="331" mass="35054">MTETYDITIIGGGPAGMFAAFYAGMHNAKTQLLESLSELGGQVNALYPEKTILDVAGLPAINGRDLIKAQREQLTQFPLTIKTGQEVTNVTANEVGFTVTTDAGTTQTTAIIVAIGNGAFAPRPLTVPGAEAATGKQLVYSVPRLADFQDQTVMVAGGGDAAIDQALMLEPVAKSVTLLHRRAQFRGLAHMVDLLHASTVAVKTPYLIREVAPTATGQLKVTLKEVGSQTATAEQIVDKLVVSYGYTSDHHTLAGWDIDLAETRNLINVSQTMETSVPGIYAIGDGVTYPGKQPLIATGYGEAPVAVQSIMTQFFPDRRGPMHSTSLTPQS</sequence>
<gene>
    <name type="ordered locus">LVIS_1813</name>
</gene>
<organism>
    <name type="scientific">Levilactobacillus brevis (strain ATCC 367 / BCRC 12310 / CIP 105137 / JCM 1170 / LMG 11437 / NCIMB 947 / NCTC 947)</name>
    <name type="common">Lactobacillus brevis</name>
    <dbReference type="NCBI Taxonomy" id="387344"/>
    <lineage>
        <taxon>Bacteria</taxon>
        <taxon>Bacillati</taxon>
        <taxon>Bacillota</taxon>
        <taxon>Bacilli</taxon>
        <taxon>Lactobacillales</taxon>
        <taxon>Lactobacillaceae</taxon>
        <taxon>Levilactobacillus</taxon>
    </lineage>
</organism>
<evidence type="ECO:0000255" key="1">
    <source>
        <dbReference type="HAMAP-Rule" id="MF_01685"/>
    </source>
</evidence>
<name>FENR_LEVBA</name>
<accession>Q03PJ4</accession>
<reference key="1">
    <citation type="journal article" date="2006" name="Proc. Natl. Acad. Sci. U.S.A.">
        <title>Comparative genomics of the lactic acid bacteria.</title>
        <authorList>
            <person name="Makarova K.S."/>
            <person name="Slesarev A."/>
            <person name="Wolf Y.I."/>
            <person name="Sorokin A."/>
            <person name="Mirkin B."/>
            <person name="Koonin E.V."/>
            <person name="Pavlov A."/>
            <person name="Pavlova N."/>
            <person name="Karamychev V."/>
            <person name="Polouchine N."/>
            <person name="Shakhova V."/>
            <person name="Grigoriev I."/>
            <person name="Lou Y."/>
            <person name="Rohksar D."/>
            <person name="Lucas S."/>
            <person name="Huang K."/>
            <person name="Goodstein D.M."/>
            <person name="Hawkins T."/>
            <person name="Plengvidhya V."/>
            <person name="Welker D."/>
            <person name="Hughes J."/>
            <person name="Goh Y."/>
            <person name="Benson A."/>
            <person name="Baldwin K."/>
            <person name="Lee J.-H."/>
            <person name="Diaz-Muniz I."/>
            <person name="Dosti B."/>
            <person name="Smeianov V."/>
            <person name="Wechter W."/>
            <person name="Barabote R."/>
            <person name="Lorca G."/>
            <person name="Altermann E."/>
            <person name="Barrangou R."/>
            <person name="Ganesan B."/>
            <person name="Xie Y."/>
            <person name="Rawsthorne H."/>
            <person name="Tamir D."/>
            <person name="Parker C."/>
            <person name="Breidt F."/>
            <person name="Broadbent J.R."/>
            <person name="Hutkins R."/>
            <person name="O'Sullivan D."/>
            <person name="Steele J."/>
            <person name="Unlu G."/>
            <person name="Saier M.H. Jr."/>
            <person name="Klaenhammer T."/>
            <person name="Richardson P."/>
            <person name="Kozyavkin S."/>
            <person name="Weimer B.C."/>
            <person name="Mills D.A."/>
        </authorList>
    </citation>
    <scope>NUCLEOTIDE SEQUENCE [LARGE SCALE GENOMIC DNA]</scope>
    <source>
        <strain>ATCC 367 / BCRC 12310 / CIP 105137 / JCM 1170 / LMG 11437 / NCIMB 947 / NCTC 947</strain>
    </source>
</reference>
<protein>
    <recommendedName>
        <fullName evidence="1">Ferredoxin--NADP reductase</fullName>
        <shortName evidence="1">FNR</shortName>
        <shortName evidence="1">Fd-NADP(+) reductase</shortName>
        <ecNumber evidence="1">1.18.1.2</ecNumber>
    </recommendedName>
</protein>
<proteinExistence type="inferred from homology"/>
<dbReference type="EC" id="1.18.1.2" evidence="1"/>
<dbReference type="EMBL" id="CP000416">
    <property type="protein sequence ID" value="ABJ64878.1"/>
    <property type="molecule type" value="Genomic_DNA"/>
</dbReference>
<dbReference type="RefSeq" id="WP_011668429.1">
    <property type="nucleotide sequence ID" value="NC_008497.1"/>
</dbReference>
<dbReference type="SMR" id="Q03PJ4"/>
<dbReference type="STRING" id="387344.LVIS_1813"/>
<dbReference type="KEGG" id="lbr:LVIS_1813"/>
<dbReference type="PATRIC" id="fig|387344.15.peg.1723"/>
<dbReference type="eggNOG" id="COG0492">
    <property type="taxonomic scope" value="Bacteria"/>
</dbReference>
<dbReference type="HOGENOM" id="CLU_031864_5_5_9"/>
<dbReference type="Proteomes" id="UP000001652">
    <property type="component" value="Chromosome"/>
</dbReference>
<dbReference type="GO" id="GO:0004324">
    <property type="term" value="F:ferredoxin-NADP+ reductase activity"/>
    <property type="evidence" value="ECO:0007669"/>
    <property type="project" value="UniProtKB-UniRule"/>
</dbReference>
<dbReference type="GO" id="GO:0050660">
    <property type="term" value="F:flavin adenine dinucleotide binding"/>
    <property type="evidence" value="ECO:0007669"/>
    <property type="project" value="UniProtKB-UniRule"/>
</dbReference>
<dbReference type="GO" id="GO:0050661">
    <property type="term" value="F:NADP binding"/>
    <property type="evidence" value="ECO:0007669"/>
    <property type="project" value="UniProtKB-UniRule"/>
</dbReference>
<dbReference type="Gene3D" id="3.50.50.60">
    <property type="entry name" value="FAD/NAD(P)-binding domain"/>
    <property type="match status" value="2"/>
</dbReference>
<dbReference type="HAMAP" id="MF_01685">
    <property type="entry name" value="FENR2"/>
    <property type="match status" value="1"/>
</dbReference>
<dbReference type="InterPro" id="IPR036188">
    <property type="entry name" value="FAD/NAD-bd_sf"/>
</dbReference>
<dbReference type="InterPro" id="IPR023753">
    <property type="entry name" value="FAD/NAD-binding_dom"/>
</dbReference>
<dbReference type="InterPro" id="IPR022890">
    <property type="entry name" value="Fd--NADP_Rdtase_type_2"/>
</dbReference>
<dbReference type="InterPro" id="IPR050097">
    <property type="entry name" value="Ferredoxin-NADP_redctase_2"/>
</dbReference>
<dbReference type="PANTHER" id="PTHR48105">
    <property type="entry name" value="THIOREDOXIN REDUCTASE 1-RELATED-RELATED"/>
    <property type="match status" value="1"/>
</dbReference>
<dbReference type="Pfam" id="PF07992">
    <property type="entry name" value="Pyr_redox_2"/>
    <property type="match status" value="1"/>
</dbReference>
<dbReference type="PRINTS" id="PR00368">
    <property type="entry name" value="FADPNR"/>
</dbReference>
<dbReference type="PRINTS" id="PR00469">
    <property type="entry name" value="PNDRDTASEII"/>
</dbReference>
<dbReference type="SUPFAM" id="SSF51905">
    <property type="entry name" value="FAD/NAD(P)-binding domain"/>
    <property type="match status" value="2"/>
</dbReference>